<proteinExistence type="inferred from homology"/>
<organism>
    <name type="scientific">Caulobacter vibrioides (strain ATCC 19089 / CIP 103742 / CB 15)</name>
    <name type="common">Caulobacter crescentus</name>
    <dbReference type="NCBI Taxonomy" id="190650"/>
    <lineage>
        <taxon>Bacteria</taxon>
        <taxon>Pseudomonadati</taxon>
        <taxon>Pseudomonadota</taxon>
        <taxon>Alphaproteobacteria</taxon>
        <taxon>Caulobacterales</taxon>
        <taxon>Caulobacteraceae</taxon>
        <taxon>Caulobacter</taxon>
    </lineage>
</organism>
<gene>
    <name evidence="1" type="primary">accA</name>
    <name type="ordered locus">CC_2995</name>
</gene>
<sequence length="320" mass="34759">MAAHYLDFERPIADLESKIEELSRLSETAGPGAFDTEIQALRDRAQELRKEAYANLDAWQKTMVARHPQRPHLRDYVAGLIDEFVELRGDRKFADDQAIVGGLGRFRGQPVVVMGHEKGHDTTTRLKHNFGMARPEGYRKAVRLMDMAERFNLPVITFVDTAGAYPGLGAEERGQAEAIARSTERCLTLGVPMVATIVGEGGSGGAIALAGANRVLILEHSIYSVISPEGAASILWRDGARAKDAATQMRITAQDLIKLGIVDRIVEEPAGGAHSDTEAAIQAVGDAVEDELKAMAAMSPAELKKQRSDRFYAIGRAGLQ</sequence>
<feature type="chain" id="PRO_0000223750" description="Acetyl-coenzyme A carboxylase carboxyl transferase subunit alpha">
    <location>
        <begin position="1"/>
        <end position="320"/>
    </location>
</feature>
<feature type="domain" description="CoA carboxyltransferase C-terminal" evidence="2">
    <location>
        <begin position="33"/>
        <end position="294"/>
    </location>
</feature>
<dbReference type="EC" id="2.1.3.15" evidence="1"/>
<dbReference type="EMBL" id="AE005673">
    <property type="protein sequence ID" value="AAK24957.1"/>
    <property type="molecule type" value="Genomic_DNA"/>
</dbReference>
<dbReference type="PIR" id="A87620">
    <property type="entry name" value="A87620"/>
</dbReference>
<dbReference type="RefSeq" id="NP_421789.1">
    <property type="nucleotide sequence ID" value="NC_002696.2"/>
</dbReference>
<dbReference type="RefSeq" id="WP_010920832.1">
    <property type="nucleotide sequence ID" value="NC_002696.2"/>
</dbReference>
<dbReference type="SMR" id="Q9A448"/>
<dbReference type="STRING" id="190650.CC_2995"/>
<dbReference type="EnsemblBacteria" id="AAK24957">
    <property type="protein sequence ID" value="AAK24957"/>
    <property type="gene ID" value="CC_2995"/>
</dbReference>
<dbReference type="KEGG" id="ccr:CC_2995"/>
<dbReference type="PATRIC" id="fig|190650.5.peg.3001"/>
<dbReference type="eggNOG" id="COG0825">
    <property type="taxonomic scope" value="Bacteria"/>
</dbReference>
<dbReference type="HOGENOM" id="CLU_015486_0_2_5"/>
<dbReference type="BioCyc" id="CAULO:CC2995-MONOMER"/>
<dbReference type="UniPathway" id="UPA00655">
    <property type="reaction ID" value="UER00711"/>
</dbReference>
<dbReference type="Proteomes" id="UP000001816">
    <property type="component" value="Chromosome"/>
</dbReference>
<dbReference type="GO" id="GO:0009317">
    <property type="term" value="C:acetyl-CoA carboxylase complex"/>
    <property type="evidence" value="ECO:0007669"/>
    <property type="project" value="InterPro"/>
</dbReference>
<dbReference type="GO" id="GO:0003989">
    <property type="term" value="F:acetyl-CoA carboxylase activity"/>
    <property type="evidence" value="ECO:0007669"/>
    <property type="project" value="InterPro"/>
</dbReference>
<dbReference type="GO" id="GO:0005524">
    <property type="term" value="F:ATP binding"/>
    <property type="evidence" value="ECO:0007669"/>
    <property type="project" value="UniProtKB-KW"/>
</dbReference>
<dbReference type="GO" id="GO:0016743">
    <property type="term" value="F:carboxyl- or carbamoyltransferase activity"/>
    <property type="evidence" value="ECO:0007669"/>
    <property type="project" value="UniProtKB-UniRule"/>
</dbReference>
<dbReference type="GO" id="GO:0006633">
    <property type="term" value="P:fatty acid biosynthetic process"/>
    <property type="evidence" value="ECO:0007669"/>
    <property type="project" value="UniProtKB-KW"/>
</dbReference>
<dbReference type="GO" id="GO:2001295">
    <property type="term" value="P:malonyl-CoA biosynthetic process"/>
    <property type="evidence" value="ECO:0007669"/>
    <property type="project" value="UniProtKB-UniRule"/>
</dbReference>
<dbReference type="Gene3D" id="3.90.226.10">
    <property type="entry name" value="2-enoyl-CoA Hydratase, Chain A, domain 1"/>
    <property type="match status" value="1"/>
</dbReference>
<dbReference type="HAMAP" id="MF_00823">
    <property type="entry name" value="AcetylCoA_CT_alpha"/>
    <property type="match status" value="1"/>
</dbReference>
<dbReference type="InterPro" id="IPR001095">
    <property type="entry name" value="Acetyl_CoA_COase_a_su"/>
</dbReference>
<dbReference type="InterPro" id="IPR029045">
    <property type="entry name" value="ClpP/crotonase-like_dom_sf"/>
</dbReference>
<dbReference type="InterPro" id="IPR011763">
    <property type="entry name" value="COA_CT_C"/>
</dbReference>
<dbReference type="NCBIfam" id="TIGR00513">
    <property type="entry name" value="accA"/>
    <property type="match status" value="1"/>
</dbReference>
<dbReference type="NCBIfam" id="NF041504">
    <property type="entry name" value="AccA_sub"/>
    <property type="match status" value="1"/>
</dbReference>
<dbReference type="NCBIfam" id="NF004344">
    <property type="entry name" value="PRK05724.1"/>
    <property type="match status" value="1"/>
</dbReference>
<dbReference type="PANTHER" id="PTHR42853">
    <property type="entry name" value="ACETYL-COENZYME A CARBOXYLASE CARBOXYL TRANSFERASE SUBUNIT ALPHA"/>
    <property type="match status" value="1"/>
</dbReference>
<dbReference type="PANTHER" id="PTHR42853:SF3">
    <property type="entry name" value="ACETYL-COENZYME A CARBOXYLASE CARBOXYL TRANSFERASE SUBUNIT ALPHA, CHLOROPLASTIC"/>
    <property type="match status" value="1"/>
</dbReference>
<dbReference type="Pfam" id="PF03255">
    <property type="entry name" value="ACCA"/>
    <property type="match status" value="1"/>
</dbReference>
<dbReference type="PRINTS" id="PR01069">
    <property type="entry name" value="ACCCTRFRASEA"/>
</dbReference>
<dbReference type="SUPFAM" id="SSF52096">
    <property type="entry name" value="ClpP/crotonase"/>
    <property type="match status" value="1"/>
</dbReference>
<dbReference type="PROSITE" id="PS50989">
    <property type="entry name" value="COA_CT_CTER"/>
    <property type="match status" value="1"/>
</dbReference>
<evidence type="ECO:0000255" key="1">
    <source>
        <dbReference type="HAMAP-Rule" id="MF_00823"/>
    </source>
</evidence>
<evidence type="ECO:0000255" key="2">
    <source>
        <dbReference type="PROSITE-ProRule" id="PRU01137"/>
    </source>
</evidence>
<name>ACCA_CAUVC</name>
<comment type="function">
    <text evidence="1">Component of the acetyl coenzyme A carboxylase (ACC) complex. First, biotin carboxylase catalyzes the carboxylation of biotin on its carrier protein (BCCP) and then the CO(2) group is transferred by the carboxyltransferase to acetyl-CoA to form malonyl-CoA.</text>
</comment>
<comment type="catalytic activity">
    <reaction evidence="1">
        <text>N(6)-carboxybiotinyl-L-lysyl-[protein] + acetyl-CoA = N(6)-biotinyl-L-lysyl-[protein] + malonyl-CoA</text>
        <dbReference type="Rhea" id="RHEA:54728"/>
        <dbReference type="Rhea" id="RHEA-COMP:10505"/>
        <dbReference type="Rhea" id="RHEA-COMP:10506"/>
        <dbReference type="ChEBI" id="CHEBI:57288"/>
        <dbReference type="ChEBI" id="CHEBI:57384"/>
        <dbReference type="ChEBI" id="CHEBI:83144"/>
        <dbReference type="ChEBI" id="CHEBI:83145"/>
        <dbReference type="EC" id="2.1.3.15"/>
    </reaction>
</comment>
<comment type="pathway">
    <text evidence="1">Lipid metabolism; malonyl-CoA biosynthesis; malonyl-CoA from acetyl-CoA: step 1/1.</text>
</comment>
<comment type="subunit">
    <text evidence="1">Acetyl-CoA carboxylase is a heterohexamer composed of biotin carboxyl carrier protein (AccB), biotin carboxylase (AccC) and two subunits each of ACCase subunit alpha (AccA) and ACCase subunit beta (AccD).</text>
</comment>
<comment type="subcellular location">
    <subcellularLocation>
        <location evidence="1">Cytoplasm</location>
    </subcellularLocation>
</comment>
<comment type="similarity">
    <text evidence="1">Belongs to the AccA family.</text>
</comment>
<protein>
    <recommendedName>
        <fullName evidence="1">Acetyl-coenzyme A carboxylase carboxyl transferase subunit alpha</fullName>
        <shortName evidence="1">ACCase subunit alpha</shortName>
        <shortName evidence="1">Acetyl-CoA carboxylase carboxyltransferase subunit alpha</shortName>
        <ecNumber evidence="1">2.1.3.15</ecNumber>
    </recommendedName>
</protein>
<accession>Q9A448</accession>
<reference key="1">
    <citation type="journal article" date="2001" name="Proc. Natl. Acad. Sci. U.S.A.">
        <title>Complete genome sequence of Caulobacter crescentus.</title>
        <authorList>
            <person name="Nierman W.C."/>
            <person name="Feldblyum T.V."/>
            <person name="Laub M.T."/>
            <person name="Paulsen I.T."/>
            <person name="Nelson K.E."/>
            <person name="Eisen J.A."/>
            <person name="Heidelberg J.F."/>
            <person name="Alley M.R.K."/>
            <person name="Ohta N."/>
            <person name="Maddock J.R."/>
            <person name="Potocka I."/>
            <person name="Nelson W.C."/>
            <person name="Newton A."/>
            <person name="Stephens C."/>
            <person name="Phadke N.D."/>
            <person name="Ely B."/>
            <person name="DeBoy R.T."/>
            <person name="Dodson R.J."/>
            <person name="Durkin A.S."/>
            <person name="Gwinn M.L."/>
            <person name="Haft D.H."/>
            <person name="Kolonay J.F."/>
            <person name="Smit J."/>
            <person name="Craven M.B."/>
            <person name="Khouri H.M."/>
            <person name="Shetty J."/>
            <person name="Berry K.J."/>
            <person name="Utterback T.R."/>
            <person name="Tran K."/>
            <person name="Wolf A.M."/>
            <person name="Vamathevan J.J."/>
            <person name="Ermolaeva M.D."/>
            <person name="White O."/>
            <person name="Salzberg S.L."/>
            <person name="Venter J.C."/>
            <person name="Shapiro L."/>
            <person name="Fraser C.M."/>
        </authorList>
    </citation>
    <scope>NUCLEOTIDE SEQUENCE [LARGE SCALE GENOMIC DNA]</scope>
    <source>
        <strain>ATCC 19089 / CIP 103742 / CB 15</strain>
    </source>
</reference>
<keyword id="KW-0067">ATP-binding</keyword>
<keyword id="KW-0963">Cytoplasm</keyword>
<keyword id="KW-0275">Fatty acid biosynthesis</keyword>
<keyword id="KW-0276">Fatty acid metabolism</keyword>
<keyword id="KW-0444">Lipid biosynthesis</keyword>
<keyword id="KW-0443">Lipid metabolism</keyword>
<keyword id="KW-0547">Nucleotide-binding</keyword>
<keyword id="KW-1185">Reference proteome</keyword>
<keyword id="KW-0808">Transferase</keyword>